<name>P2AJ2_AMOJI</name>
<evidence type="ECO:0000250" key="1">
    <source>
        <dbReference type="UniProtKB" id="A7WNV6"/>
    </source>
</evidence>
<evidence type="ECO:0000250" key="2">
    <source>
        <dbReference type="UniProtKB" id="G3ETQ3"/>
    </source>
</evidence>
<evidence type="ECO:0000255" key="3"/>
<evidence type="ECO:0000269" key="4">
    <source>
    </source>
</evidence>
<evidence type="ECO:0000303" key="5">
    <source>
    </source>
</evidence>
<evidence type="ECO:0000305" key="6"/>
<evidence type="ECO:0000305" key="7">
    <source>
    </source>
</evidence>
<evidence type="ECO:0000312" key="8">
    <source>
        <dbReference type="EMBL" id="AEM77058.1"/>
    </source>
</evidence>
<comment type="function">
    <text evidence="2">Displays broad-spectrum antibacterial activity against a range of Gram-positive and Gram-negative bacteria. Has low hemolytic activity, low cytotoxicity and low antioxidant activity (By similarity).</text>
</comment>
<comment type="subcellular location">
    <subcellularLocation>
        <location evidence="4">Secreted</location>
    </subcellularLocation>
</comment>
<comment type="tissue specificity">
    <text evidence="7">Expressed by the skin glands.</text>
</comment>
<comment type="mass spectrometry" mass="3064.8" method="FAB" evidence="4"/>
<comment type="similarity">
    <text evidence="3">Belongs to the frog skin active peptide (FSAP) family. Brevinin subfamily.</text>
</comment>
<feature type="signal peptide" evidence="3">
    <location>
        <begin position="1"/>
        <end position="22"/>
    </location>
</feature>
<feature type="propeptide" id="PRO_0000415408" evidence="3 5">
    <location>
        <begin position="23"/>
        <end position="40"/>
    </location>
</feature>
<feature type="peptide" id="PRO_0000415409" description="Palustrin-2AJ2" evidence="4">
    <location>
        <begin position="43"/>
        <end position="71"/>
    </location>
</feature>
<feature type="disulfide bond" evidence="1">
    <location>
        <begin position="65"/>
        <end position="71"/>
    </location>
</feature>
<sequence length="71" mass="7815">MFTLKKPLLVLLFLGTVSLSLCEQERAADDDEGEVIEEEVKRGFMDTAKQVAKNVAVTLIDKLRCKVTGGC</sequence>
<keyword id="KW-0878">Amphibian defense peptide</keyword>
<keyword id="KW-0044">Antibiotic</keyword>
<keyword id="KW-0929">Antimicrobial</keyword>
<keyword id="KW-0049">Antioxidant</keyword>
<keyword id="KW-0165">Cleavage on pair of basic residues</keyword>
<keyword id="KW-0204">Cytolysis</keyword>
<keyword id="KW-0903">Direct protein sequencing</keyword>
<keyword id="KW-1015">Disulfide bond</keyword>
<keyword id="KW-0354">Hemolysis</keyword>
<keyword id="KW-0964">Secreted</keyword>
<keyword id="KW-0732">Signal</keyword>
<dbReference type="EMBL" id="JF489155">
    <property type="protein sequence ID" value="AEM77058.1"/>
    <property type="molecule type" value="mRNA"/>
</dbReference>
<dbReference type="SMR" id="G3F828"/>
<dbReference type="GO" id="GO:0005576">
    <property type="term" value="C:extracellular region"/>
    <property type="evidence" value="ECO:0000314"/>
    <property type="project" value="UniProtKB"/>
</dbReference>
<dbReference type="GO" id="GO:0016209">
    <property type="term" value="F:antioxidant activity"/>
    <property type="evidence" value="ECO:0007669"/>
    <property type="project" value="UniProtKB-KW"/>
</dbReference>
<dbReference type="GO" id="GO:0050829">
    <property type="term" value="P:defense response to Gram-negative bacterium"/>
    <property type="evidence" value="ECO:0000250"/>
    <property type="project" value="UniProtKB"/>
</dbReference>
<dbReference type="GO" id="GO:0050830">
    <property type="term" value="P:defense response to Gram-positive bacterium"/>
    <property type="evidence" value="ECO:0000250"/>
    <property type="project" value="UniProtKB"/>
</dbReference>
<dbReference type="GO" id="GO:0044179">
    <property type="term" value="P:hemolysis in another organism"/>
    <property type="evidence" value="ECO:0000250"/>
    <property type="project" value="UniProtKB"/>
</dbReference>
<dbReference type="GO" id="GO:0031640">
    <property type="term" value="P:killing of cells of another organism"/>
    <property type="evidence" value="ECO:0000250"/>
    <property type="project" value="UniProtKB"/>
</dbReference>
<dbReference type="InterPro" id="IPR012521">
    <property type="entry name" value="Antimicrobial_frog_2"/>
</dbReference>
<dbReference type="InterPro" id="IPR004275">
    <property type="entry name" value="Frog_antimicrobial_propeptide"/>
</dbReference>
<dbReference type="Pfam" id="PF08023">
    <property type="entry name" value="Antimicrobial_2"/>
    <property type="match status" value="1"/>
</dbReference>
<dbReference type="Pfam" id="PF03032">
    <property type="entry name" value="FSAP_sig_propep"/>
    <property type="match status" value="1"/>
</dbReference>
<protein>
    <recommendedName>
        <fullName evidence="5">Palustrin-2AJ2</fullName>
    </recommendedName>
</protein>
<organism>
    <name type="scientific">Amolops jingdongensis</name>
    <name type="common">Chinese torrent frog</name>
    <dbReference type="NCBI Taxonomy" id="1077530"/>
    <lineage>
        <taxon>Eukaryota</taxon>
        <taxon>Metazoa</taxon>
        <taxon>Chordata</taxon>
        <taxon>Craniata</taxon>
        <taxon>Vertebrata</taxon>
        <taxon>Euteleostomi</taxon>
        <taxon>Amphibia</taxon>
        <taxon>Batrachia</taxon>
        <taxon>Anura</taxon>
        <taxon>Neobatrachia</taxon>
        <taxon>Ranoidea</taxon>
        <taxon>Ranidae</taxon>
        <taxon>Amolops</taxon>
    </lineage>
</organism>
<proteinExistence type="evidence at protein level"/>
<accession>G3F828</accession>
<reference evidence="6 8" key="1">
    <citation type="journal article" date="2012" name="Biochimie">
        <title>Two novel families of antimicrobial peptides from skin secretions of the Chinese torrent frog, Amolops jingdongensis.</title>
        <authorList>
            <person name="Chen Z."/>
            <person name="Yang X."/>
            <person name="Liu Z."/>
            <person name="Zeng L."/>
            <person name="Lee W."/>
            <person name="Zhang Y."/>
        </authorList>
    </citation>
    <scope>NUCLEOTIDE SEQUENCE [MRNA]</scope>
    <scope>PROTEIN SEQUENCE OF 43-71</scope>
    <scope>SUBCELLULAR LOCATION</scope>
    <scope>MASS SPECTROMETRY</scope>
    <source>
        <tissue evidence="8">Skin</tissue>
        <tissue evidence="4">Skin secretion</tissue>
    </source>
</reference>